<name>KCNC2_MOUSE</name>
<protein>
    <recommendedName>
        <fullName evidence="21">Voltage-gated potassium channel KCNC2</fullName>
    </recommendedName>
    <alternativeName>
        <fullName evidence="24">Potassium voltage-gated channel subfamily C member 2</fullName>
    </alternativeName>
    <alternativeName>
        <fullName evidence="2">Shaw-like potassium channel</fullName>
    </alternativeName>
    <alternativeName>
        <fullName evidence="20">Voltage-gated potassium channel Kv3.2</fullName>
    </alternativeName>
</protein>
<feature type="chain" id="PRO_0000310417" description="Voltage-gated potassium channel KCNC2">
    <location>
        <begin position="1"/>
        <end position="642"/>
    </location>
</feature>
<feature type="topological domain" description="Cytoplasmic" evidence="6">
    <location>
        <begin position="1"/>
        <end position="233"/>
    </location>
</feature>
<feature type="transmembrane region" description="Helical; Name=Segment S1" evidence="6">
    <location>
        <begin position="234"/>
        <end position="254"/>
    </location>
</feature>
<feature type="transmembrane region" description="Helical; Name=Segment S2" evidence="6">
    <location>
        <begin position="287"/>
        <end position="307"/>
    </location>
</feature>
<feature type="topological domain" description="Cytoplasmic" evidence="6">
    <location>
        <begin position="308"/>
        <end position="317"/>
    </location>
</feature>
<feature type="transmembrane region" description="Helical; Name=Segment S3" evidence="6">
    <location>
        <begin position="318"/>
        <end position="338"/>
    </location>
</feature>
<feature type="transmembrane region" description="Helical; Voltage-sensor; Name=Segment S4" evidence="6">
    <location>
        <begin position="350"/>
        <end position="372"/>
    </location>
</feature>
<feature type="topological domain" description="Cytoplasmic" evidence="6">
    <location>
        <begin position="373"/>
        <end position="385"/>
    </location>
</feature>
<feature type="transmembrane region" description="Helical; Name=Segment S5" evidence="6">
    <location>
        <begin position="386"/>
        <end position="406"/>
    </location>
</feature>
<feature type="transmembrane region" description="Helical; Name=Segment S6" evidence="6">
    <location>
        <begin position="457"/>
        <end position="477"/>
    </location>
</feature>
<feature type="topological domain" description="Cytoplasmic" evidence="6">
    <location>
        <begin position="478"/>
        <end position="642"/>
    </location>
</feature>
<feature type="region of interest" description="Disordered" evidence="7">
    <location>
        <begin position="45"/>
        <end position="98"/>
    </location>
</feature>
<feature type="region of interest" description="Disordered" evidence="7">
    <location>
        <begin position="542"/>
        <end position="576"/>
    </location>
</feature>
<feature type="short sequence motif" description="Selectivity filter" evidence="1">
    <location>
        <begin position="441"/>
        <end position="446"/>
    </location>
</feature>
<feature type="compositionally biased region" description="Pro residues" evidence="7">
    <location>
        <begin position="56"/>
        <end position="72"/>
    </location>
</feature>
<feature type="compositionally biased region" description="Gly residues" evidence="7">
    <location>
        <begin position="78"/>
        <end position="98"/>
    </location>
</feature>
<feature type="binding site" evidence="3">
    <location>
        <position position="128"/>
    </location>
    <ligand>
        <name>Zn(2+)</name>
        <dbReference type="ChEBI" id="CHEBI:29105"/>
    </ligand>
</feature>
<feature type="binding site" evidence="3">
    <location>
        <position position="134"/>
    </location>
    <ligand>
        <name>Zn(2+)</name>
        <dbReference type="ChEBI" id="CHEBI:29105"/>
    </ligand>
</feature>
<feature type="binding site" evidence="3">
    <location>
        <position position="155"/>
    </location>
    <ligand>
        <name>Zn(2+)</name>
        <dbReference type="ChEBI" id="CHEBI:29105"/>
    </ligand>
</feature>
<feature type="binding site" evidence="3">
    <location>
        <position position="156"/>
    </location>
    <ligand>
        <name>Zn(2+)</name>
        <dbReference type="ChEBI" id="CHEBI:29105"/>
    </ligand>
</feature>
<feature type="binding site" evidence="3">
    <location>
        <position position="441"/>
    </location>
    <ligand>
        <name>K(+)</name>
        <dbReference type="ChEBI" id="CHEBI:29103"/>
        <note>ligand shared between homotetrameric partners</note>
    </ligand>
</feature>
<feature type="binding site" evidence="3">
    <location>
        <position position="442"/>
    </location>
    <ligand>
        <name>K(+)</name>
        <dbReference type="ChEBI" id="CHEBI:29103"/>
        <note>ligand shared between homotetrameric partners</note>
    </ligand>
</feature>
<feature type="binding site" evidence="3">
    <location>
        <position position="443"/>
    </location>
    <ligand>
        <name>K(+)</name>
        <dbReference type="ChEBI" id="CHEBI:29103"/>
        <note>ligand shared between homotetrameric partners</note>
    </ligand>
</feature>
<feature type="binding site" evidence="3">
    <location>
        <position position="444"/>
    </location>
    <ligand>
        <name>K(+)</name>
        <dbReference type="ChEBI" id="CHEBI:29103"/>
        <note>ligand shared between homotetrameric partners</note>
    </ligand>
</feature>
<feature type="modified residue" description="Phosphoserine" evidence="25">
    <location>
        <position position="604"/>
    </location>
</feature>
<feature type="glycosylation site" description="N-linked (GlcNAc...) asparagine" evidence="6">
    <location>
        <position position="263"/>
    </location>
</feature>
<feature type="glycosylation site" description="N-linked (GlcNAc...) asparagine" evidence="6">
    <location>
        <position position="270"/>
    </location>
</feature>
<dbReference type="EMBL" id="BC116289">
    <property type="protein sequence ID" value="AAI16290.1"/>
    <property type="molecule type" value="mRNA"/>
</dbReference>
<dbReference type="EMBL" id="BC116290">
    <property type="protein sequence ID" value="AAI16291.1"/>
    <property type="molecule type" value="mRNA"/>
</dbReference>
<dbReference type="CCDS" id="CCDS88085.1"/>
<dbReference type="RefSeq" id="NP_001346681.1">
    <property type="nucleotide sequence ID" value="NM_001359752.1"/>
</dbReference>
<dbReference type="RefSeq" id="NP_001346682.1">
    <property type="nucleotide sequence ID" value="NM_001359753.1"/>
</dbReference>
<dbReference type="RefSeq" id="NP_001366572.1">
    <property type="nucleotide sequence ID" value="NM_001379643.1"/>
</dbReference>
<dbReference type="RefSeq" id="XP_006513748.1">
    <property type="nucleotide sequence ID" value="XM_006513685.3"/>
</dbReference>
<dbReference type="RefSeq" id="XP_006513750.1">
    <property type="nucleotide sequence ID" value="XM_006513687.5"/>
</dbReference>
<dbReference type="RefSeq" id="XP_006513751.1">
    <property type="nucleotide sequence ID" value="XM_006513688.1"/>
</dbReference>
<dbReference type="RefSeq" id="XP_006513752.1">
    <property type="nucleotide sequence ID" value="XM_006513689.3"/>
</dbReference>
<dbReference type="RefSeq" id="XP_006513753.1">
    <property type="nucleotide sequence ID" value="XM_006513690.3"/>
</dbReference>
<dbReference type="RefSeq" id="XP_030100956.1">
    <property type="nucleotide sequence ID" value="XM_030245096.1"/>
</dbReference>
<dbReference type="SMR" id="Q14B80"/>
<dbReference type="BioGRID" id="234484">
    <property type="interactions" value="1"/>
</dbReference>
<dbReference type="FunCoup" id="Q14B80">
    <property type="interactions" value="258"/>
</dbReference>
<dbReference type="STRING" id="10090.ENSMUSP00000151579"/>
<dbReference type="GlyCosmos" id="Q14B80">
    <property type="glycosylation" value="2 sites, No reported glycans"/>
</dbReference>
<dbReference type="GlyGen" id="Q14B80">
    <property type="glycosylation" value="2 sites"/>
</dbReference>
<dbReference type="iPTMnet" id="Q14B80"/>
<dbReference type="PhosphoSitePlus" id="Q14B80"/>
<dbReference type="PaxDb" id="10090-ENSMUSP00000089814"/>
<dbReference type="ProteomicsDB" id="269259"/>
<dbReference type="ABCD" id="Q14B80">
    <property type="antibodies" value="3 sequenced antibodies"/>
</dbReference>
<dbReference type="Antibodypedia" id="17155">
    <property type="antibodies" value="266 antibodies from 30 providers"/>
</dbReference>
<dbReference type="DNASU" id="268345"/>
<dbReference type="Ensembl" id="ENSMUST00000092175.4">
    <property type="protein sequence ID" value="ENSMUSP00000089814.4"/>
    <property type="gene ID" value="ENSMUSG00000035681.8"/>
</dbReference>
<dbReference type="GeneID" id="268345"/>
<dbReference type="UCSC" id="uc007hao.1">
    <property type="organism name" value="mouse"/>
</dbReference>
<dbReference type="AGR" id="MGI:96668"/>
<dbReference type="CTD" id="3747"/>
<dbReference type="MGI" id="MGI:96668">
    <property type="gene designation" value="Kcnc2"/>
</dbReference>
<dbReference type="VEuPathDB" id="HostDB:ENSMUSG00000035681"/>
<dbReference type="eggNOG" id="KOG3713">
    <property type="taxonomic scope" value="Eukaryota"/>
</dbReference>
<dbReference type="GeneTree" id="ENSGT00940000157371"/>
<dbReference type="InParanoid" id="Q14B80"/>
<dbReference type="OrthoDB" id="10025005at2759"/>
<dbReference type="PhylomeDB" id="Q14B80"/>
<dbReference type="Reactome" id="R-MMU-1296072">
    <property type="pathway name" value="Voltage gated Potassium channels"/>
</dbReference>
<dbReference type="Reactome" id="R-MMU-381676">
    <property type="pathway name" value="Glucagon-like Peptide-1 (GLP1) regulates insulin secretion"/>
</dbReference>
<dbReference type="BioGRID-ORCS" id="268345">
    <property type="hits" value="2 hits in 76 CRISPR screens"/>
</dbReference>
<dbReference type="ChiTaRS" id="Kcnc2">
    <property type="organism name" value="mouse"/>
</dbReference>
<dbReference type="PRO" id="PR:Q14B80"/>
<dbReference type="Proteomes" id="UP000000589">
    <property type="component" value="Chromosome 10"/>
</dbReference>
<dbReference type="RNAct" id="Q14B80">
    <property type="molecule type" value="protein"/>
</dbReference>
<dbReference type="Bgee" id="ENSMUSG00000035681">
    <property type="expression patterns" value="Expressed in lateral geniculate body and 114 other cell types or tissues"/>
</dbReference>
<dbReference type="ExpressionAtlas" id="Q14B80">
    <property type="expression patterns" value="baseline and differential"/>
</dbReference>
<dbReference type="GO" id="GO:0016324">
    <property type="term" value="C:apical plasma membrane"/>
    <property type="evidence" value="ECO:0000250"/>
    <property type="project" value="UniProtKB"/>
</dbReference>
<dbReference type="GO" id="GO:0030673">
    <property type="term" value="C:axolemma"/>
    <property type="evidence" value="ECO:0007669"/>
    <property type="project" value="Ensembl"/>
</dbReference>
<dbReference type="GO" id="GO:0030424">
    <property type="term" value="C:axon"/>
    <property type="evidence" value="ECO:0000314"/>
    <property type="project" value="UniProtKB"/>
</dbReference>
<dbReference type="GO" id="GO:0016323">
    <property type="term" value="C:basolateral plasma membrane"/>
    <property type="evidence" value="ECO:0000250"/>
    <property type="project" value="UniProtKB"/>
</dbReference>
<dbReference type="GO" id="GO:0044297">
    <property type="term" value="C:cell body"/>
    <property type="evidence" value="ECO:0000314"/>
    <property type="project" value="UniProtKB"/>
</dbReference>
<dbReference type="GO" id="GO:0030425">
    <property type="term" value="C:dendrite"/>
    <property type="evidence" value="ECO:0000314"/>
    <property type="project" value="UniProtKB"/>
</dbReference>
<dbReference type="GO" id="GO:0098982">
    <property type="term" value="C:GABA-ergic synapse"/>
    <property type="evidence" value="ECO:0007669"/>
    <property type="project" value="Ensembl"/>
</dbReference>
<dbReference type="GO" id="GO:0016020">
    <property type="term" value="C:membrane"/>
    <property type="evidence" value="ECO:0000314"/>
    <property type="project" value="UniProtKB"/>
</dbReference>
<dbReference type="GO" id="GO:0032809">
    <property type="term" value="C:neuronal cell body membrane"/>
    <property type="evidence" value="ECO:0000314"/>
    <property type="project" value="UniProtKB"/>
</dbReference>
<dbReference type="GO" id="GO:0043204">
    <property type="term" value="C:perikaryon"/>
    <property type="evidence" value="ECO:0000314"/>
    <property type="project" value="UniProtKB"/>
</dbReference>
<dbReference type="GO" id="GO:0005886">
    <property type="term" value="C:plasma membrane"/>
    <property type="evidence" value="ECO:0000314"/>
    <property type="project" value="UniProtKB"/>
</dbReference>
<dbReference type="GO" id="GO:0045211">
    <property type="term" value="C:postsynaptic membrane"/>
    <property type="evidence" value="ECO:0000314"/>
    <property type="project" value="UniProtKB"/>
</dbReference>
<dbReference type="GO" id="GO:0042734">
    <property type="term" value="C:presynaptic membrane"/>
    <property type="evidence" value="ECO:0000314"/>
    <property type="project" value="UniProtKB"/>
</dbReference>
<dbReference type="GO" id="GO:0045202">
    <property type="term" value="C:synapse"/>
    <property type="evidence" value="ECO:0000250"/>
    <property type="project" value="UniProtKB"/>
</dbReference>
<dbReference type="GO" id="GO:0043195">
    <property type="term" value="C:terminal bouton"/>
    <property type="evidence" value="ECO:0007669"/>
    <property type="project" value="Ensembl"/>
</dbReference>
<dbReference type="GO" id="GO:0031982">
    <property type="term" value="C:vesicle"/>
    <property type="evidence" value="ECO:0007669"/>
    <property type="project" value="Ensembl"/>
</dbReference>
<dbReference type="GO" id="GO:0008076">
    <property type="term" value="C:voltage-gated potassium channel complex"/>
    <property type="evidence" value="ECO:0000250"/>
    <property type="project" value="UniProtKB"/>
</dbReference>
<dbReference type="GO" id="GO:0005251">
    <property type="term" value="F:delayed rectifier potassium channel activity"/>
    <property type="evidence" value="ECO:0000250"/>
    <property type="project" value="UniProtKB"/>
</dbReference>
<dbReference type="GO" id="GO:0046872">
    <property type="term" value="F:metal ion binding"/>
    <property type="evidence" value="ECO:0007669"/>
    <property type="project" value="UniProtKB-KW"/>
</dbReference>
<dbReference type="GO" id="GO:0044325">
    <property type="term" value="F:transmembrane transporter binding"/>
    <property type="evidence" value="ECO:0000353"/>
    <property type="project" value="UniProtKB"/>
</dbReference>
<dbReference type="GO" id="GO:0099508">
    <property type="term" value="F:voltage-gated monoatomic ion channel activity involved in regulation of presynaptic membrane potential"/>
    <property type="evidence" value="ECO:0007669"/>
    <property type="project" value="Ensembl"/>
</dbReference>
<dbReference type="GO" id="GO:0005249">
    <property type="term" value="F:voltage-gated potassium channel activity"/>
    <property type="evidence" value="ECO:0000314"/>
    <property type="project" value="UniProtKB"/>
</dbReference>
<dbReference type="GO" id="GO:0001508">
    <property type="term" value="P:action potential"/>
    <property type="evidence" value="ECO:0000315"/>
    <property type="project" value="MGI"/>
</dbReference>
<dbReference type="GO" id="GO:0071242">
    <property type="term" value="P:cellular response to ammonium ion"/>
    <property type="evidence" value="ECO:0007669"/>
    <property type="project" value="Ensembl"/>
</dbReference>
<dbReference type="GO" id="GO:0071732">
    <property type="term" value="P:cellular response to nitric oxide"/>
    <property type="evidence" value="ECO:0000250"/>
    <property type="project" value="UniProtKB"/>
</dbReference>
<dbReference type="GO" id="GO:0097237">
    <property type="term" value="P:cellular response to toxic substance"/>
    <property type="evidence" value="ECO:0007669"/>
    <property type="project" value="Ensembl"/>
</dbReference>
<dbReference type="GO" id="GO:0021759">
    <property type="term" value="P:globus pallidus development"/>
    <property type="evidence" value="ECO:0007669"/>
    <property type="project" value="Ensembl"/>
</dbReference>
<dbReference type="GO" id="GO:0060081">
    <property type="term" value="P:membrane hyperpolarization"/>
    <property type="evidence" value="ECO:0000315"/>
    <property type="project" value="UniProtKB"/>
</dbReference>
<dbReference type="GO" id="GO:0038060">
    <property type="term" value="P:nitric oxide-cGMP-mediated signaling"/>
    <property type="evidence" value="ECO:0000250"/>
    <property type="project" value="UniProtKB"/>
</dbReference>
<dbReference type="GO" id="GO:0021554">
    <property type="term" value="P:optic nerve development"/>
    <property type="evidence" value="ECO:0007669"/>
    <property type="project" value="Ensembl"/>
</dbReference>
<dbReference type="GO" id="GO:1901381">
    <property type="term" value="P:positive regulation of potassium ion transmembrane transport"/>
    <property type="evidence" value="ECO:0007669"/>
    <property type="project" value="Ensembl"/>
</dbReference>
<dbReference type="GO" id="GO:0071805">
    <property type="term" value="P:potassium ion transmembrane transport"/>
    <property type="evidence" value="ECO:0000250"/>
    <property type="project" value="UniProtKB"/>
</dbReference>
<dbReference type="GO" id="GO:0006813">
    <property type="term" value="P:potassium ion transport"/>
    <property type="evidence" value="ECO:0000314"/>
    <property type="project" value="UniProtKB"/>
</dbReference>
<dbReference type="GO" id="GO:0051291">
    <property type="term" value="P:protein heterooligomerization"/>
    <property type="evidence" value="ECO:0000250"/>
    <property type="project" value="UniProtKB"/>
</dbReference>
<dbReference type="GO" id="GO:0051260">
    <property type="term" value="P:protein homooligomerization"/>
    <property type="evidence" value="ECO:0000250"/>
    <property type="project" value="UniProtKB"/>
</dbReference>
<dbReference type="GO" id="GO:0099605">
    <property type="term" value="P:regulation of action potential firing rate"/>
    <property type="evidence" value="ECO:0000315"/>
    <property type="project" value="UniProtKB"/>
</dbReference>
<dbReference type="GO" id="GO:0014075">
    <property type="term" value="P:response to amine"/>
    <property type="evidence" value="ECO:0007669"/>
    <property type="project" value="Ensembl"/>
</dbReference>
<dbReference type="GO" id="GO:0045471">
    <property type="term" value="P:response to ethanol"/>
    <property type="evidence" value="ECO:0007669"/>
    <property type="project" value="Ensembl"/>
</dbReference>
<dbReference type="GO" id="GO:0009642">
    <property type="term" value="P:response to light intensity"/>
    <property type="evidence" value="ECO:0007669"/>
    <property type="project" value="Ensembl"/>
</dbReference>
<dbReference type="GO" id="GO:0032026">
    <property type="term" value="P:response to magnesium ion"/>
    <property type="evidence" value="ECO:0007669"/>
    <property type="project" value="Ensembl"/>
</dbReference>
<dbReference type="GO" id="GO:1990089">
    <property type="term" value="P:response to nerve growth factor"/>
    <property type="evidence" value="ECO:0007669"/>
    <property type="project" value="Ensembl"/>
</dbReference>
<dbReference type="CDD" id="cd18415">
    <property type="entry name" value="BTB_KCNC2_4"/>
    <property type="match status" value="1"/>
</dbReference>
<dbReference type="FunFam" id="1.10.287.70:FF:000011">
    <property type="entry name" value="Potassium channel, voltage-gated Shaw-related subfamily C, member 4"/>
    <property type="match status" value="1"/>
</dbReference>
<dbReference type="FunFam" id="1.20.120.350:FF:000014">
    <property type="entry name" value="Potassium channel, voltage-gated Shaw-related subfamily C, member 4"/>
    <property type="match status" value="1"/>
</dbReference>
<dbReference type="FunFam" id="3.30.710.10:FF:000002">
    <property type="entry name" value="Potassium voltage-gated channel subfamily C member 2"/>
    <property type="match status" value="1"/>
</dbReference>
<dbReference type="Gene3D" id="1.10.287.70">
    <property type="match status" value="1"/>
</dbReference>
<dbReference type="Gene3D" id="3.30.710.10">
    <property type="entry name" value="Potassium Channel Kv1.1, Chain A"/>
    <property type="match status" value="1"/>
</dbReference>
<dbReference type="Gene3D" id="1.20.120.350">
    <property type="entry name" value="Voltage-gated potassium channels. Chain C"/>
    <property type="match status" value="1"/>
</dbReference>
<dbReference type="InterPro" id="IPR000210">
    <property type="entry name" value="BTB/POZ_dom"/>
</dbReference>
<dbReference type="InterPro" id="IPR005821">
    <property type="entry name" value="Ion_trans_dom"/>
</dbReference>
<dbReference type="InterPro" id="IPR003968">
    <property type="entry name" value="K_chnl_volt-dep_Kv"/>
</dbReference>
<dbReference type="InterPro" id="IPR003974">
    <property type="entry name" value="K_chnl_volt-dep_Kv3"/>
</dbReference>
<dbReference type="InterPro" id="IPR011333">
    <property type="entry name" value="SKP1/BTB/POZ_sf"/>
</dbReference>
<dbReference type="InterPro" id="IPR003131">
    <property type="entry name" value="T1-type_BTB"/>
</dbReference>
<dbReference type="InterPro" id="IPR028325">
    <property type="entry name" value="VG_K_chnl"/>
</dbReference>
<dbReference type="InterPro" id="IPR027359">
    <property type="entry name" value="Volt_channel_dom_sf"/>
</dbReference>
<dbReference type="PANTHER" id="PTHR11537:SF172">
    <property type="entry name" value="POTASSIUM VOLTAGE-GATED CHANNEL SUBFAMILY C MEMBER 2"/>
    <property type="match status" value="1"/>
</dbReference>
<dbReference type="PANTHER" id="PTHR11537">
    <property type="entry name" value="VOLTAGE-GATED POTASSIUM CHANNEL"/>
    <property type="match status" value="1"/>
</dbReference>
<dbReference type="Pfam" id="PF02214">
    <property type="entry name" value="BTB_2"/>
    <property type="match status" value="1"/>
</dbReference>
<dbReference type="Pfam" id="PF00520">
    <property type="entry name" value="Ion_trans"/>
    <property type="match status" value="1"/>
</dbReference>
<dbReference type="PRINTS" id="PR00169">
    <property type="entry name" value="KCHANNEL"/>
</dbReference>
<dbReference type="PRINTS" id="PR01491">
    <property type="entry name" value="KVCHANNEL"/>
</dbReference>
<dbReference type="PRINTS" id="PR01498">
    <property type="entry name" value="SHAWCHANNEL"/>
</dbReference>
<dbReference type="SMART" id="SM00225">
    <property type="entry name" value="BTB"/>
    <property type="match status" value="1"/>
</dbReference>
<dbReference type="SUPFAM" id="SSF54695">
    <property type="entry name" value="POZ domain"/>
    <property type="match status" value="1"/>
</dbReference>
<dbReference type="SUPFAM" id="SSF81324">
    <property type="entry name" value="Voltage-gated potassium channels"/>
    <property type="match status" value="1"/>
</dbReference>
<gene>
    <name evidence="24" type="primary">Kcnc2</name>
</gene>
<evidence type="ECO:0000250" key="1"/>
<evidence type="ECO:0000250" key="2">
    <source>
        <dbReference type="UniProtKB" id="P22462"/>
    </source>
</evidence>
<evidence type="ECO:0000250" key="3">
    <source>
        <dbReference type="UniProtKB" id="P48547"/>
    </source>
</evidence>
<evidence type="ECO:0000250" key="4">
    <source>
        <dbReference type="UniProtKB" id="P63142"/>
    </source>
</evidence>
<evidence type="ECO:0000250" key="5">
    <source>
        <dbReference type="UniProtKB" id="Q96PR1"/>
    </source>
</evidence>
<evidence type="ECO:0000255" key="6"/>
<evidence type="ECO:0000256" key="7">
    <source>
        <dbReference type="SAM" id="MobiDB-lite"/>
    </source>
</evidence>
<evidence type="ECO:0000269" key="8">
    <source>
    </source>
</evidence>
<evidence type="ECO:0000269" key="9">
    <source>
    </source>
</evidence>
<evidence type="ECO:0000269" key="10">
    <source>
    </source>
</evidence>
<evidence type="ECO:0000269" key="11">
    <source>
    </source>
</evidence>
<evidence type="ECO:0000269" key="12">
    <source>
    </source>
</evidence>
<evidence type="ECO:0000269" key="13">
    <source>
    </source>
</evidence>
<evidence type="ECO:0000269" key="14">
    <source>
    </source>
</evidence>
<evidence type="ECO:0000269" key="15">
    <source>
    </source>
</evidence>
<evidence type="ECO:0000269" key="16">
    <source>
    </source>
</evidence>
<evidence type="ECO:0000269" key="17">
    <source>
    </source>
</evidence>
<evidence type="ECO:0000269" key="18">
    <source>
    </source>
</evidence>
<evidence type="ECO:0000269" key="19">
    <source>
    </source>
</evidence>
<evidence type="ECO:0000303" key="20">
    <source>
    </source>
</evidence>
<evidence type="ECO:0000305" key="21"/>
<evidence type="ECO:0000305" key="22">
    <source>
    </source>
</evidence>
<evidence type="ECO:0000305" key="23">
    <source>
    </source>
</evidence>
<evidence type="ECO:0000312" key="24">
    <source>
        <dbReference type="MGI" id="MGI:96668"/>
    </source>
</evidence>
<evidence type="ECO:0007744" key="25">
    <source>
    </source>
</evidence>
<reference key="1">
    <citation type="journal article" date="2004" name="Genome Res.">
        <title>The status, quality, and expansion of the NIH full-length cDNA project: the Mammalian Gene Collection (MGC).</title>
        <authorList>
            <consortium name="The MGC Project Team"/>
        </authorList>
    </citation>
    <scope>NUCLEOTIDE SEQUENCE [LARGE SCALE MRNA]</scope>
</reference>
<reference key="2">
    <citation type="journal article" date="1999" name="J. Neurophysiol.">
        <title>Function of specific K(+) channels in sustained high-frequency firing of fast-spiking neocortical interneurons.</title>
        <authorList>
            <person name="Erisir A."/>
            <person name="Lau D."/>
            <person name="Rudy B."/>
            <person name="Leonard C.S."/>
        </authorList>
    </citation>
    <scope>FUNCTION</scope>
    <scope>TRANSPORTER ACTIVITY</scope>
</reference>
<reference key="3">
    <citation type="journal article" date="1999" name="Ann. N. Y. Acad. Sci.">
        <title>Contributions of Kv3 channels to neuronal excitability.</title>
        <authorList>
            <person name="Rudy B."/>
            <person name="Chow A."/>
            <person name="Lau D."/>
            <person name="Amarillo Y."/>
            <person name="Ozaita A."/>
            <person name="Saganich M."/>
            <person name="Moreno H."/>
            <person name="Nadal M.S."/>
            <person name="Hernandez-Pineda R."/>
            <person name="Hernandez-Cruz A."/>
            <person name="Erisir A."/>
            <person name="Leonard C."/>
            <person name="Vega-Saenz de Miera E."/>
        </authorList>
    </citation>
    <scope>REVIEW</scope>
</reference>
<reference key="4">
    <citation type="journal article" date="1999" name="J. Neurosci.">
        <title>K(+) channel expression distinguishes subpopulations of parvalbumin- and somatostatin-containing neocortical interneurons.</title>
        <authorList>
            <person name="Chow A."/>
            <person name="Erisir A."/>
            <person name="Farb C."/>
            <person name="Nadal M.S."/>
            <person name="Ozaita A."/>
            <person name="Lau D."/>
            <person name="Welker E."/>
            <person name="Rudy B."/>
        </authorList>
    </citation>
    <scope>SUBUNIT</scope>
    <scope>SUBCELLULAR LOCATION</scope>
    <scope>TISSUE SPECIFICITY</scope>
</reference>
<reference key="5">
    <citation type="journal article" date="2000" name="J. Neurosci.">
        <title>Impaired fast-spiking, suppressed cortical inhibition, and increased susceptibility to seizures in mice lacking Kv3.2 K+ channel proteins.</title>
        <authorList>
            <person name="Lau D."/>
            <person name="Vega-Saenz de Miera E.C."/>
            <person name="Contreras D."/>
            <person name="Ozaita A."/>
            <person name="Harvey M."/>
            <person name="Chow A."/>
            <person name="Noebels J.L."/>
            <person name="Paylor R."/>
            <person name="Morgan J.I."/>
            <person name="Leonard C.S."/>
            <person name="Rud y B."/>
        </authorList>
    </citation>
    <scope>FUNCTION</scope>
    <scope>SUBCELLULAR LOCATION</scope>
    <scope>TISSUE SPECIFICITY</scope>
    <scope>DISRUPTION PHENOTYPE</scope>
</reference>
<reference key="6">
    <citation type="journal article" date="2000" name="Nat. Neurosci.">
        <title>H2 histamine receptor-phosphorylation of Kv3.2 modulates interneuron fast spiking.</title>
        <authorList>
            <person name="Atzori M."/>
            <person name="Lau D."/>
            <person name="Tansey E.P."/>
            <person name="Chow A."/>
            <person name="Ozaita A."/>
            <person name="Rudy B."/>
            <person name="McBain C.J."/>
        </authorList>
    </citation>
    <scope>FUNCTION</scope>
    <scope>TRANSPORTER ACTIVITY</scope>
    <scope>PHOSPHORYLATION</scope>
    <scope>SUBCELLULAR LOCATION</scope>
    <scope>TISSUE SPECIFICITY</scope>
    <scope>DISRUPTION PHENOTYPE</scope>
</reference>
<reference key="7">
    <citation type="journal article" date="2001" name="Trends Neurosci.">
        <title>Kv3 channels: voltage-gated K+ channels designed for high-frequency repetitive firing.</title>
        <authorList>
            <person name="Rudy B."/>
            <person name="McBain C.J."/>
        </authorList>
    </citation>
    <scope>REVIEW</scope>
</reference>
<reference key="8">
    <citation type="journal article" date="2002" name="Hippocampus">
        <title>Developmental expression of potassium-channel subunit Kv3.2 within subpopulations of mouse hippocampal inhibitory interneurons.</title>
        <authorList>
            <person name="Tansey E.P."/>
            <person name="Chow A."/>
            <person name="Rudy B."/>
            <person name="McBain C.J."/>
        </authorList>
    </citation>
    <scope>INTERACTION WITH KCNC1</scope>
    <scope>SUBCELLULAR LOCATION</scope>
    <scope>TISSUE SPECIFICITY</scope>
</reference>
<reference key="9">
    <citation type="journal article" date="2004" name="J. Neurosci.">
        <title>A unique role for Kv3 voltage-gated potassium channels in starburst amacrine cell signaling in mouse retina.</title>
        <authorList>
            <person name="Ozaita A."/>
            <person name="Petit-Jacques J."/>
            <person name="Volgyi B."/>
            <person name="Ho C.S."/>
            <person name="Joho R.H."/>
            <person name="Bloomfield S.A."/>
            <person name="Rudy B."/>
        </authorList>
    </citation>
    <scope>FUNCTION</scope>
    <scope>TRANSPORTER ACTIVITY</scope>
    <scope>SUBCELLULAR LOCATION</scope>
    <scope>DISRUPTION PHENOTYPE</scope>
    <scope>TISSUE SPECIFICITY</scope>
</reference>
<reference key="10">
    <citation type="journal article" date="2005" name="J. Neurosci.">
        <title>Specific functions of synaptically localized potassium channels in synaptic transmission at the neocortical GABAergic fast-spiking cell synapse.</title>
        <authorList>
            <person name="Goldberg E.M."/>
            <person name="Watanabe S."/>
            <person name="Chang S.Y."/>
            <person name="Joho R.H."/>
            <person name="Huang Z.J."/>
            <person name="Leonard C.S."/>
            <person name="Rudy B."/>
        </authorList>
    </citation>
    <scope>FUNCTION</scope>
    <scope>DISRUPTION PHENOTYPE</scope>
</reference>
<reference key="11">
    <citation type="journal article" date="2005" name="Nat. Neurosci.">
        <title>Fast delayed rectifier potassium current is required for circadian neural activity.</title>
        <authorList>
            <person name="Itri J.N."/>
            <person name="Michel S."/>
            <person name="Vansteensel M.J."/>
            <person name="Meijer J.H."/>
            <person name="Colwell C.S."/>
        </authorList>
    </citation>
    <scope>SUBCELLULAR LOCATION</scope>
    <scope>TISSUE SPECIFICITY</scope>
</reference>
<reference key="12">
    <citation type="journal article" date="2007" name="J. Physiol. (Lond.)">
        <title>Differential regulation of action potential firing in adult murine thalamocortical neurons by Kv3.2, Kv1, and SK potassium and N-type calcium channels.</title>
        <authorList>
            <person name="Kasten M.R."/>
            <person name="Rudy B."/>
            <person name="Anderson M.P."/>
        </authorList>
    </citation>
    <scope>FUNCTION</scope>
    <scope>SUBCELLULAR LOCATION</scope>
    <scope>DISRUPTION PHENOTYPE</scope>
</reference>
<reference key="13">
    <citation type="journal article" date="2010" name="Cell">
        <title>A tissue-specific atlas of mouse protein phosphorylation and expression.</title>
        <authorList>
            <person name="Huttlin E.L."/>
            <person name="Jedrychowski M.P."/>
            <person name="Elias J.E."/>
            <person name="Goswami T."/>
            <person name="Rad R."/>
            <person name="Beausoleil S.A."/>
            <person name="Villen J."/>
            <person name="Haas W."/>
            <person name="Sowa M.E."/>
            <person name="Gygi S.P."/>
        </authorList>
    </citation>
    <scope>PHOSPHORYLATION [LARGE SCALE ANALYSIS] AT SER-604</scope>
    <scope>IDENTIFICATION BY MASS SPECTROMETRY [LARGE SCALE ANALYSIS]</scope>
    <source>
        <tissue>Brain</tissue>
    </source>
</reference>
<reference key="14">
    <citation type="journal article" date="2011" name="J. Neurosci.">
        <title>Fast delayed rectifier potassium current: critical for input and output of the circadian system.</title>
        <authorList>
            <person name="Kudo T."/>
            <person name="Loh D.H."/>
            <person name="Kuljis D."/>
            <person name="Constance C."/>
            <person name="Colwell C.S."/>
        </authorList>
    </citation>
    <scope>FUNCTION</scope>
    <scope>SUBCELLULAR LOCATION</scope>
    <scope>TISSUE SPECIFICITY</scope>
    <scope>DISRUPTION PHENOTYPE</scope>
</reference>
<reference key="15">
    <citation type="journal article" date="2012" name="J. Mol. Neurosci.">
        <title>Brain expression of Kv3 subunits during development, adulthood and aging and in a murine model of Alzheimer's disease.</title>
        <authorList>
            <person name="Boda E."/>
            <person name="Hoxha E."/>
            <person name="Pini A."/>
            <person name="Montarolo F."/>
            <person name="Tempia F."/>
        </authorList>
    </citation>
    <scope>TISSUE SPECIFICITY</scope>
    <scope>DEVELOPMENTAL STAGE</scope>
</reference>
<reference key="16">
    <citation type="journal article" date="2012" name="J. Neurophysiol.">
        <title>Impaired long-range synchronization of gamma oscillations in the neocortex of a mouse lacking Kv3.2 potassium channels.</title>
        <authorList>
            <person name="Harvey M."/>
            <person name="Lau D."/>
            <person name="Civillico E."/>
            <person name="Rudy B."/>
            <person name="Contreras D."/>
        </authorList>
    </citation>
    <scope>FUNCTION</scope>
    <scope>SUBCELLULAR LOCATION</scope>
    <scope>DISRUPTION PHENOTYPE</scope>
</reference>
<comment type="function">
    <text evidence="2 8 9 10 11 12 13 15 16 17 19 22 23">Voltage-gated potassium channel that mediates transmembrane potassium transport in excitable membranes, primarily in the brain. Contributes to the regulation of the fast action potential repolarization and in sustained high-frequency firing in neurons of the central nervous system (PubMed:10414303, PubMed:10561420, PubMed:10903572, PubMed:11124984, PubMed:11506885, PubMed:15317859, PubMed:15917463, PubMed:17761775, PubMed:21414897). Homotetramer channels mediate delayed-rectifier voltage-dependent potassium currents that activate rapidly at high-threshold voltages and inactivate slowly (PubMed:10414303, PubMed:10561420, PubMed:10903572, PubMed:15317859). Forms tetrameric channels through which potassium ions pass in accordance with their electrochemical gradient. The channel alternates between opened and closed conformations in response to the voltage difference across the membrane (By similarity). Can form functional homotetrameric and heterotetrameric channels that contain variable proportions of KCNC1, and possibly other family members as well; channel properties depend on the type of alpha subunits that are part of the channel (PubMed:10531438, PubMed:12000114). Channel properties may be modulated by either the association with ancillary subunits, such as KCNE1, KCNE2 and KCNE3 or indirectly by nitric oxide (NO) through a cGMP- and PKG-mediated signaling cascade, slowing channel activation and deactivation of delayed rectifier potassium channels (By similarity). Contributes to fire sustained trains of very brief action potentials at high frequency in thalamocortical and suprachiasmatic nucleus (SCN) neurons, in hippocampal and neocortical interneurons and in retinal ganglion cells (PubMed:10561420, PubMed:10903572, PubMed:11506885, PubMed:17761775). Sustained maximal action potential firing frequency in inhibitory hippocampal interneurons is negatively modulated by histamine H2 receptor activation in a cAMP- and protein kinase (PKA) phosphorylation-dependent manner (PubMed:10903572). Plays a role in maintaining the fidelity of synaptic transmission in neocortical GABAergic interneurons by generating action potential (AP) repolarization at nerve terminals, thus reducing spike-evoked calcium influx and GABA neurotransmitter release (PubMed:15917463). Required for long-range synchronization of gamma oscillations over distance in the neocortex (PubMed:22539821). Contributes to the modulation of the circadian rhythm of spontaneous action potential firing in suprachiasmatic nucleus (SCN) neurons in a light-dependent manner (PubMed:21414897).</text>
</comment>
<comment type="catalytic activity">
    <reaction evidence="9 10 13">
        <text>K(+)(in) = K(+)(out)</text>
        <dbReference type="Rhea" id="RHEA:29463"/>
        <dbReference type="ChEBI" id="CHEBI:29103"/>
    </reaction>
</comment>
<comment type="activity regulation">
    <text evidence="2 5 22">Inhibited by millimolar levels of tetraethylammonium (TEA). Contrary to other channels, inhibited only by millimolar levels of 4-aminopyridine (4-AP). Inhibited by Stichodactyla helianthus peptide ShK.</text>
</comment>
<comment type="biophysicochemical properties">
    <kinetics>
        <text evidence="22">Homotetrameric channels expressed in xenopus oocytes or in mammalian non-neuronal cells display delayed-rectifier voltage-dependent potassium currents, that are rapidly activated during membrane depolarization, i.e within a risetime of a few msec. After that, inactivates very slowly, i.e within about &gt;800 msec. Their activation requires a threshold potential at about -10 mV, with a midpoint activation at about 12.1 mV and a steepness parameter of about 8.4 mV. The voltage-dependence of activation and inactivation and other channel characteristics vary depending on the experimental conditions, the expression system, the presence or absence of ancillary subunits and post-translational modifications.</text>
    </kinetics>
</comment>
<comment type="subunit">
    <text evidence="2 8 12">Homotetramer and heterotetramer with other channel-forming alpha subunits, such as KCNC1 (PubMed:10531438). Interacts with KCNC1 (PubMed:10531438, PubMed:12000114). Homotetramer or heterotetramer channel activity is regulated by association with modulating ancillary subunits such as KCNE1, KCNE2 and KCNE3, creating a functionally diverse range of channel complexes. Interacts with KCNE1, KCNE2 and KCNE3 (By similarity).</text>
</comment>
<comment type="subcellular location">
    <subcellularLocation>
        <location evidence="8 11 13 16 17 19">Cell membrane</location>
        <topology evidence="6">Multi-pass membrane protein</topology>
    </subcellularLocation>
    <subcellularLocation>
        <location evidence="12">Membrane</location>
        <topology evidence="6">Multi-pass membrane protein</topology>
    </subcellularLocation>
    <subcellularLocation>
        <location evidence="8 10 12 13 14">Perikaryon</location>
    </subcellularLocation>
    <subcellularLocation>
        <location evidence="8 10">Cell projection</location>
        <location evidence="8 10">Axon</location>
    </subcellularLocation>
    <subcellularLocation>
        <location evidence="8 10 12 13">Cell projection</location>
        <location evidence="8 10 12 13">Dendrite</location>
    </subcellularLocation>
    <subcellularLocation>
        <location evidence="8">Postsynaptic cell membrane</location>
    </subcellularLocation>
    <subcellularLocation>
        <location evidence="8">Presynaptic cell membrane</location>
    </subcellularLocation>
    <subcellularLocation>
        <location evidence="2">Synapse</location>
        <location evidence="2">Synaptosome</location>
    </subcellularLocation>
    <subcellularLocation>
        <location evidence="2">Synapse</location>
    </subcellularLocation>
    <subcellularLocation>
        <location evidence="2">Apical cell membrane</location>
    </subcellularLocation>
    <subcellularLocation>
        <location evidence="2">Basolateral cell membrane</location>
    </subcellularLocation>
    <text evidence="2 8 10 12 13">Colocalizes with parvalbumin in globus pallidus neurons. Localizes in thalamocortical axons and synapses (By similarity). Localizes on the surface of cell somata, proximal dendrites and axonal membranes (PubMed:10903572, PubMed:12000114). Also detected throughout the neuropil (PubMed:12000114). Localized in starburst cell somata and proximal dendrite processes (PubMed:15317859). Colocalized with GABA in presynaptic terminals (PubMed:10531438). Clustered in patches in somatic and proximal dendritic membrane as well as in axons and presnypatic terminals of GABAergic interneurons; some of these patches are found near postsynaptic sites (PubMed:10531438).</text>
</comment>
<comment type="tissue specificity">
    <text evidence="8 10 12 13 14 17 18">Weakly expressed in the brain at postnatal age day 7 (P7) and increased at P60 (PubMed:21912965). Not detectable in newborn hippocampus. Expressed weakly at P7 in the early developing hippocampus, increasing progressively and reaching a plateau of expression at P14 that is maintained throughout P51. Expressed in paravalbumin- and somatostain-containing inhibitory interneurons of the hippocampus; in the CA1/CA3 stratum oriens-alveus and stratum pyramidale and in cells within the hilus and subgranular layer of the dentate gyrus (DG) (PubMed:10903572, PubMed:12000114). Strongly expressed in parvalbumin (PV)-containing fast-spiking GABAergic inhibitor interneurons in deep cortical layers V and VI (PubMed:10531438). Also expressed in non-fast-spiking calbindin (CB)- and/or somatostatin (SOM)-containing interneurons in deep cortical layers V and VI (PubMed:10531438). Expressed in starburst amacrine cells of the retina in the inner nuclear layer (INL) and ganglion cell layer (GCL) (PubMed:15317859). Expressed in the suprachiasmatic nucleus (SCN) (at protein level) (PubMed:15852012, PubMed:21414897). Expressed in the early developing brain, increasing progressively until P14 (PubMed:21912965).</text>
</comment>
<comment type="developmental stage">
    <text evidence="18">Weakly expressed in the brain at 14 dpc (at protein level) (PubMed:21912965). Expressed in the brain at 14 dpc (PubMed:21912965).</text>
</comment>
<comment type="domain">
    <text evidence="4">The transmembrane segment S4 functions as a voltage-sensor and is characterized by a series of positively charged amino acids at every third position. Channel opening and closing is effected by a conformation change that affects the position and orientation of the voltage-sensor paddle formed by S3 and S4 within the membrane. A transmembrane electric field that is positive inside would push the positively charged S4 segment outwards, thereby opening the pore, while a field that is negative inside would pull the S4 segment inwards and close the pore. Changes in the position and orientation of S4 are then transmitted to the activation gate formed by the inner helix bundle via the S4-S5 linker region.</text>
</comment>
<comment type="PTM">
    <text evidence="4 10">Phosphorylated by PKA in cortical synaptosomes. cAMP-dependent phosphorylation inhibits channel activity (By similarity). Histamine H2 receptor- and PKA-induced phosphorylation extends action potential spike duration, reduces action potential spike amplitude, sustains maximum firing frequency in hippocampal interneurons; also reduces the incidence of high-frequency oscillations in hippocampal CA3 pyramidal cell layers (PubMed:10903572).</text>
</comment>
<comment type="disruption phenotype">
    <text evidence="10 11 13 15 16 17 19">Mice are healthy, grow normally, are fertile and show no evidence of severe sensory or motor abnormalities (PubMed:11124984). Show increased seizure susceptibility and reduced long-range synchronization of gamma oscillations over distance in the neocortex (PubMed:22539821). Thalamocortical neurons show a strong attenuation in maximal peak firing rates, with larger spikes and slower action potential repolarization (PubMed:17761775). Neocortical GABAergic interneurons display broader spikes and sustain lower trains of high-frequency spikes without accommodation or spike doublets in rapid succession (PubMed:11124984, PubMed:22539821). Histamine H2 receptor- and PKA-induced hippocampal inhibitory interneurons display no maximal sustainable firing frequency modulation (PubMed:10903572). Double knockout of KCNC2 and KCNC1 exhibited disrupted daily rhythms in wheel-running behavior (PubMed:21414897). Display smaller outward currents and slower deactivation in starburst amacrine cells compared with KCNC2 knockout mice (PubMed:15317859). Neocortical GABAergic interneuron terminals display also a reduced rate of spike repolarization, broader spike, increased calcium influx and release of GABA neurotransmitter (PubMed:15917463). Suprachiasmatic nucleus (SCN) neurons display a reduction in the magnitude of fast delayed rectifier potassium currents, wider action potentials, reduced spontaneous firing activity during the day and reduced NMDA-evoked increase firing responses during the night (PubMed:21414897).</text>
</comment>
<comment type="similarity">
    <text evidence="21">Belongs to the potassium channel family. C (Shaw) (TC 1.A.1.2) subfamily. Kv3.2/KCNC2 sub-subfamily.</text>
</comment>
<sequence>MGKIESNERVILNVGGTRHETYRSTLKTLPGTRLALLASSEPQGDCLTAAGDKLQPLPPPLSPPPRPPPLSPVPSGCFEGGAGNCSSHGGNGGNGGSDHPGGGREFFFDRHPGVFAYVLNYYRTGKLHCPADVCGPLFEEELAFWGIDETDVEPCCWMTYRQHRDAEEALDIFETPDLIGGDPGDDEDLAAKRLGIEDAAGLGGPDGKSGRWRKLQPRMWALFEDPYSSRAARFIAFASLFFILVSITTFCLETHEAFNIVKNKTEPVINGTSPVLQYEIETDPALTYVEGVCVVWFTFEFLVRIVFSPNKLEFIKNLLNIIDFVAILPFYLEVGLSGLSSKAAKDVLGFLRVVRFVRILRIFKLTRHFVGLRVLGHTLRASTNEFLLLIIFLALGVLIFATMIYYAERVGAQPNDPSASEHTQFKNIPIGFWWAVVTMTTLGYGDMYPQTWSGMLVGALCALAGVLTIAMPVPVIVNNFGMYYSLAMAKQKLPRKRKKHIPPAPLASSPTFCKTELNMACNSTQSDTCLGKENRLLEHNRSVLSGDDSTGSEPPLSPPERLPIRRSSTRDKNRRGETCFLLTTGDYTCASDGGIRKGYEKSRSLNNIAGLAGNALRLSPVTSPYNSPCPLRRSRSPIPSIL</sequence>
<accession>Q14B80</accession>
<keyword id="KW-1003">Cell membrane</keyword>
<keyword id="KW-0966">Cell projection</keyword>
<keyword id="KW-0325">Glycoprotein</keyword>
<keyword id="KW-0407">Ion channel</keyword>
<keyword id="KW-0406">Ion transport</keyword>
<keyword id="KW-0472">Membrane</keyword>
<keyword id="KW-0479">Metal-binding</keyword>
<keyword id="KW-0597">Phosphoprotein</keyword>
<keyword id="KW-0628">Postsynaptic cell membrane</keyword>
<keyword id="KW-0630">Potassium</keyword>
<keyword id="KW-0631">Potassium channel</keyword>
<keyword id="KW-0633">Potassium transport</keyword>
<keyword id="KW-1185">Reference proteome</keyword>
<keyword id="KW-0770">Synapse</keyword>
<keyword id="KW-0771">Synaptosome</keyword>
<keyword id="KW-0812">Transmembrane</keyword>
<keyword id="KW-1133">Transmembrane helix</keyword>
<keyword id="KW-0813">Transport</keyword>
<keyword id="KW-0851">Voltage-gated channel</keyword>
<keyword id="KW-0862">Zinc</keyword>
<proteinExistence type="evidence at protein level"/>
<organism>
    <name type="scientific">Mus musculus</name>
    <name type="common">Mouse</name>
    <dbReference type="NCBI Taxonomy" id="10090"/>
    <lineage>
        <taxon>Eukaryota</taxon>
        <taxon>Metazoa</taxon>
        <taxon>Chordata</taxon>
        <taxon>Craniata</taxon>
        <taxon>Vertebrata</taxon>
        <taxon>Euteleostomi</taxon>
        <taxon>Mammalia</taxon>
        <taxon>Eutheria</taxon>
        <taxon>Euarchontoglires</taxon>
        <taxon>Glires</taxon>
        <taxon>Rodentia</taxon>
        <taxon>Myomorpha</taxon>
        <taxon>Muroidea</taxon>
        <taxon>Muridae</taxon>
        <taxon>Murinae</taxon>
        <taxon>Mus</taxon>
        <taxon>Mus</taxon>
    </lineage>
</organism>